<comment type="function">
    <text evidence="1">One of the primary rRNA binding proteins, it binds directly to 16S rRNA where it nucleates assembly of the body of the 30S subunit.</text>
</comment>
<comment type="function">
    <text evidence="1">With S5 and S12 plays an important role in translational accuracy.</text>
</comment>
<comment type="subunit">
    <text evidence="1">Part of the 30S ribosomal subunit. Contacts protein S5. The interaction surface between S4 and S5 is involved in control of translational fidelity.</text>
</comment>
<comment type="similarity">
    <text evidence="1">Belongs to the universal ribosomal protein uS4 family.</text>
</comment>
<sequence length="208" mass="23913">MSCINESVCKLCRRENVKLFLKGDRCYTDKCSFERRPYPPGQHGQSRLKFSEFALQLREKQKAKRYYGVSEKQFVKYVGEANRAKELTGHALLKFLETRLDNVVYTLGYANSRREARQLVKHNHFLLNGKRANIPSILVNKGDVIQVAESSREMAKIQSAIQAVARRSVPAWLEADHAKFTGTVKDLPNREDVAVAVEENMIVEYYSR</sequence>
<evidence type="ECO:0000255" key="1">
    <source>
        <dbReference type="HAMAP-Rule" id="MF_01306"/>
    </source>
</evidence>
<evidence type="ECO:0000305" key="2"/>
<keyword id="KW-1185">Reference proteome</keyword>
<keyword id="KW-0687">Ribonucleoprotein</keyword>
<keyword id="KW-0689">Ribosomal protein</keyword>
<keyword id="KW-0694">RNA-binding</keyword>
<keyword id="KW-0699">rRNA-binding</keyword>
<feature type="chain" id="PRO_0000132343" description="Small ribosomal subunit protein uS4A">
    <location>
        <begin position="1"/>
        <end position="208"/>
    </location>
</feature>
<feature type="domain" description="S4 RNA-binding" evidence="1">
    <location>
        <begin position="98"/>
        <end position="164"/>
    </location>
</feature>
<reference key="1">
    <citation type="journal article" date="2004" name="Science">
        <title>A predator unmasked: life cycle of Bdellovibrio bacteriovorus from a genomic perspective.</title>
        <authorList>
            <person name="Rendulic S."/>
            <person name="Jagtap P."/>
            <person name="Rosinus A."/>
            <person name="Eppinger M."/>
            <person name="Baar C."/>
            <person name="Lanz C."/>
            <person name="Keller H."/>
            <person name="Lambert C."/>
            <person name="Evans K.J."/>
            <person name="Goesmann A."/>
            <person name="Meyer F."/>
            <person name="Sockett R.E."/>
            <person name="Schuster S.C."/>
        </authorList>
    </citation>
    <scope>NUCLEOTIDE SEQUENCE [LARGE SCALE GENOMIC DNA]</scope>
    <source>
        <strain>ATCC 15356 / DSM 50701 / NCIMB 9529 / HD100</strain>
    </source>
</reference>
<proteinExistence type="inferred from homology"/>
<dbReference type="EMBL" id="BX842654">
    <property type="protein sequence ID" value="CAE80726.1"/>
    <property type="molecule type" value="Genomic_DNA"/>
</dbReference>
<dbReference type="RefSeq" id="WP_011165329.1">
    <property type="nucleotide sequence ID" value="NC_005363.1"/>
</dbReference>
<dbReference type="SMR" id="Q6MJ35"/>
<dbReference type="STRING" id="264462.Bd2951"/>
<dbReference type="GeneID" id="93013816"/>
<dbReference type="KEGG" id="bba:Bd2951"/>
<dbReference type="eggNOG" id="COG0522">
    <property type="taxonomic scope" value="Bacteria"/>
</dbReference>
<dbReference type="HOGENOM" id="CLU_092403_0_2_7"/>
<dbReference type="Proteomes" id="UP000008080">
    <property type="component" value="Chromosome"/>
</dbReference>
<dbReference type="GO" id="GO:0015935">
    <property type="term" value="C:small ribosomal subunit"/>
    <property type="evidence" value="ECO:0007669"/>
    <property type="project" value="InterPro"/>
</dbReference>
<dbReference type="GO" id="GO:0019843">
    <property type="term" value="F:rRNA binding"/>
    <property type="evidence" value="ECO:0007669"/>
    <property type="project" value="UniProtKB-UniRule"/>
</dbReference>
<dbReference type="GO" id="GO:0003735">
    <property type="term" value="F:structural constituent of ribosome"/>
    <property type="evidence" value="ECO:0007669"/>
    <property type="project" value="InterPro"/>
</dbReference>
<dbReference type="GO" id="GO:0042274">
    <property type="term" value="P:ribosomal small subunit biogenesis"/>
    <property type="evidence" value="ECO:0007669"/>
    <property type="project" value="TreeGrafter"/>
</dbReference>
<dbReference type="GO" id="GO:0006412">
    <property type="term" value="P:translation"/>
    <property type="evidence" value="ECO:0007669"/>
    <property type="project" value="UniProtKB-UniRule"/>
</dbReference>
<dbReference type="CDD" id="cd00165">
    <property type="entry name" value="S4"/>
    <property type="match status" value="1"/>
</dbReference>
<dbReference type="FunFam" id="3.10.290.10:FF:000001">
    <property type="entry name" value="30S ribosomal protein S4"/>
    <property type="match status" value="1"/>
</dbReference>
<dbReference type="Gene3D" id="1.10.1050.10">
    <property type="entry name" value="Ribosomal Protein S4 Delta 41, Chain A, domain 1"/>
    <property type="match status" value="1"/>
</dbReference>
<dbReference type="Gene3D" id="3.10.290.10">
    <property type="entry name" value="RNA-binding S4 domain"/>
    <property type="match status" value="1"/>
</dbReference>
<dbReference type="HAMAP" id="MF_01306_B">
    <property type="entry name" value="Ribosomal_uS4_B"/>
    <property type="match status" value="1"/>
</dbReference>
<dbReference type="InterPro" id="IPR022801">
    <property type="entry name" value="Ribosomal_uS4"/>
</dbReference>
<dbReference type="InterPro" id="IPR005709">
    <property type="entry name" value="Ribosomal_uS4_bac-type"/>
</dbReference>
<dbReference type="InterPro" id="IPR018079">
    <property type="entry name" value="Ribosomal_uS4_CS"/>
</dbReference>
<dbReference type="InterPro" id="IPR001912">
    <property type="entry name" value="Ribosomal_uS4_N"/>
</dbReference>
<dbReference type="InterPro" id="IPR002942">
    <property type="entry name" value="S4_RNA-bd"/>
</dbReference>
<dbReference type="InterPro" id="IPR036986">
    <property type="entry name" value="S4_RNA-bd_sf"/>
</dbReference>
<dbReference type="NCBIfam" id="NF003717">
    <property type="entry name" value="PRK05327.1"/>
    <property type="match status" value="1"/>
</dbReference>
<dbReference type="NCBIfam" id="TIGR01017">
    <property type="entry name" value="rpsD_bact"/>
    <property type="match status" value="1"/>
</dbReference>
<dbReference type="PANTHER" id="PTHR11831">
    <property type="entry name" value="30S 40S RIBOSOMAL PROTEIN"/>
    <property type="match status" value="1"/>
</dbReference>
<dbReference type="PANTHER" id="PTHR11831:SF4">
    <property type="entry name" value="SMALL RIBOSOMAL SUBUNIT PROTEIN US4M"/>
    <property type="match status" value="1"/>
</dbReference>
<dbReference type="Pfam" id="PF00163">
    <property type="entry name" value="Ribosomal_S4"/>
    <property type="match status" value="1"/>
</dbReference>
<dbReference type="Pfam" id="PF01479">
    <property type="entry name" value="S4"/>
    <property type="match status" value="1"/>
</dbReference>
<dbReference type="SMART" id="SM01390">
    <property type="entry name" value="Ribosomal_S4"/>
    <property type="match status" value="1"/>
</dbReference>
<dbReference type="SMART" id="SM00363">
    <property type="entry name" value="S4"/>
    <property type="match status" value="1"/>
</dbReference>
<dbReference type="SUPFAM" id="SSF55174">
    <property type="entry name" value="Alpha-L RNA-binding motif"/>
    <property type="match status" value="1"/>
</dbReference>
<dbReference type="PROSITE" id="PS00632">
    <property type="entry name" value="RIBOSOMAL_S4"/>
    <property type="match status" value="1"/>
</dbReference>
<dbReference type="PROSITE" id="PS50889">
    <property type="entry name" value="S4"/>
    <property type="match status" value="1"/>
</dbReference>
<protein>
    <recommendedName>
        <fullName evidence="1">Small ribosomal subunit protein uS4A</fullName>
    </recommendedName>
    <alternativeName>
        <fullName evidence="2">30S ribosomal protein S4 1</fullName>
    </alternativeName>
</protein>
<organism>
    <name type="scientific">Bdellovibrio bacteriovorus (strain ATCC 15356 / DSM 50701 / NCIMB 9529 / HD100)</name>
    <dbReference type="NCBI Taxonomy" id="264462"/>
    <lineage>
        <taxon>Bacteria</taxon>
        <taxon>Pseudomonadati</taxon>
        <taxon>Bdellovibrionota</taxon>
        <taxon>Bdellovibrionia</taxon>
        <taxon>Bdellovibrionales</taxon>
        <taxon>Pseudobdellovibrionaceae</taxon>
        <taxon>Bdellovibrio</taxon>
    </lineage>
</organism>
<accession>Q6MJ35</accession>
<name>RS4A_BDEBA</name>
<gene>
    <name evidence="1" type="primary">rpsD1</name>
    <name type="ordered locus">Bd2951</name>
</gene>